<organism>
    <name type="scientific">Salmonella typhimurium (strain LT2 / SGSC1412 / ATCC 700720)</name>
    <dbReference type="NCBI Taxonomy" id="99287"/>
    <lineage>
        <taxon>Bacteria</taxon>
        <taxon>Pseudomonadati</taxon>
        <taxon>Pseudomonadota</taxon>
        <taxon>Gammaproteobacteria</taxon>
        <taxon>Enterobacterales</taxon>
        <taxon>Enterobacteriaceae</taxon>
        <taxon>Salmonella</taxon>
    </lineage>
</organism>
<reference key="1">
    <citation type="journal article" date="2001" name="Nature">
        <title>Complete genome sequence of Salmonella enterica serovar Typhimurium LT2.</title>
        <authorList>
            <person name="McClelland M."/>
            <person name="Sanderson K.E."/>
            <person name="Spieth J."/>
            <person name="Clifton S.W."/>
            <person name="Latreille P."/>
            <person name="Courtney L."/>
            <person name="Porwollik S."/>
            <person name="Ali J."/>
            <person name="Dante M."/>
            <person name="Du F."/>
            <person name="Hou S."/>
            <person name="Layman D."/>
            <person name="Leonard S."/>
            <person name="Nguyen C."/>
            <person name="Scott K."/>
            <person name="Holmes A."/>
            <person name="Grewal N."/>
            <person name="Mulvaney E."/>
            <person name="Ryan E."/>
            <person name="Sun H."/>
            <person name="Florea L."/>
            <person name="Miller W."/>
            <person name="Stoneking T."/>
            <person name="Nhan M."/>
            <person name="Waterston R."/>
            <person name="Wilson R.K."/>
        </authorList>
    </citation>
    <scope>NUCLEOTIDE SEQUENCE [LARGE SCALE GENOMIC DNA]</scope>
    <source>
        <strain>LT2 / SGSC1412 / ATCC 700720</strain>
    </source>
</reference>
<reference evidence="3" key="2">
    <citation type="submission" date="2018-12" db="PDB data bank">
        <title>Crystal structure of adenosine deaminase from Salmonella typhimurium complexed with pentostatin (deoxycoformycin) (CASP target).</title>
        <authorList>
            <person name="Maltseva N."/>
            <person name="Kim Y."/>
            <person name="Grimshaw S."/>
            <person name="Joachimiak A."/>
        </authorList>
    </citation>
    <scope>X-RAY CRYSTALLOGRAPHY (1.45 ANGSTROMS) IN COMPLEX WITH PENTOSTATIN AND ZINC</scope>
    <scope>COFACTOR</scope>
</reference>
<name>ADD_SALTY</name>
<evidence type="ECO:0000255" key="1">
    <source>
        <dbReference type="HAMAP-Rule" id="MF_00540"/>
    </source>
</evidence>
<evidence type="ECO:0000269" key="2">
    <source ref="2"/>
</evidence>
<evidence type="ECO:0007744" key="3">
    <source>
        <dbReference type="PDB" id="6N9M"/>
    </source>
</evidence>
<evidence type="ECO:0007829" key="4">
    <source>
        <dbReference type="PDB" id="6N9M"/>
    </source>
</evidence>
<proteinExistence type="evidence at protein level"/>
<gene>
    <name evidence="1" type="primary">add</name>
    <name type="ordered locus">STM1463</name>
</gene>
<dbReference type="EC" id="3.5.4.4" evidence="1"/>
<dbReference type="EMBL" id="AE006468">
    <property type="protein sequence ID" value="AAL20385.1"/>
    <property type="molecule type" value="Genomic_DNA"/>
</dbReference>
<dbReference type="RefSeq" id="NP_460426.1">
    <property type="nucleotide sequence ID" value="NC_003197.2"/>
</dbReference>
<dbReference type="RefSeq" id="WP_000565569.1">
    <property type="nucleotide sequence ID" value="NC_003197.2"/>
</dbReference>
<dbReference type="PDB" id="6N9M">
    <property type="method" value="X-ray"/>
    <property type="resolution" value="1.45 A"/>
    <property type="chains" value="A=1-333"/>
</dbReference>
<dbReference type="PDBsum" id="6N9M"/>
<dbReference type="SMR" id="Q8ZPL9"/>
<dbReference type="STRING" id="99287.STM1463"/>
<dbReference type="PaxDb" id="99287-STM1463"/>
<dbReference type="GeneID" id="1252981"/>
<dbReference type="KEGG" id="stm:STM1463"/>
<dbReference type="PATRIC" id="fig|99287.12.peg.1546"/>
<dbReference type="HOGENOM" id="CLU_039228_0_2_6"/>
<dbReference type="OMA" id="NHFTIHA"/>
<dbReference type="PhylomeDB" id="Q8ZPL9"/>
<dbReference type="BioCyc" id="SENT99287:STM1463-MONOMER"/>
<dbReference type="Proteomes" id="UP000001014">
    <property type="component" value="Chromosome"/>
</dbReference>
<dbReference type="GO" id="GO:0005829">
    <property type="term" value="C:cytosol"/>
    <property type="evidence" value="ECO:0000318"/>
    <property type="project" value="GO_Central"/>
</dbReference>
<dbReference type="GO" id="GO:0046936">
    <property type="term" value="F:2'-deoxyadenosine deaminase activity"/>
    <property type="evidence" value="ECO:0007669"/>
    <property type="project" value="RHEA"/>
</dbReference>
<dbReference type="GO" id="GO:0004000">
    <property type="term" value="F:adenosine deaminase activity"/>
    <property type="evidence" value="ECO:0000318"/>
    <property type="project" value="GO_Central"/>
</dbReference>
<dbReference type="GO" id="GO:0008270">
    <property type="term" value="F:zinc ion binding"/>
    <property type="evidence" value="ECO:0007669"/>
    <property type="project" value="UniProtKB-UniRule"/>
</dbReference>
<dbReference type="GO" id="GO:0006154">
    <property type="term" value="P:adenosine catabolic process"/>
    <property type="evidence" value="ECO:0000318"/>
    <property type="project" value="GO_Central"/>
</dbReference>
<dbReference type="GO" id="GO:0043103">
    <property type="term" value="P:hypoxanthine salvage"/>
    <property type="evidence" value="ECO:0000318"/>
    <property type="project" value="GO_Central"/>
</dbReference>
<dbReference type="GO" id="GO:0046103">
    <property type="term" value="P:inosine biosynthetic process"/>
    <property type="evidence" value="ECO:0000318"/>
    <property type="project" value="GO_Central"/>
</dbReference>
<dbReference type="GO" id="GO:0009117">
    <property type="term" value="P:nucleotide metabolic process"/>
    <property type="evidence" value="ECO:0007669"/>
    <property type="project" value="UniProtKB-KW"/>
</dbReference>
<dbReference type="GO" id="GO:0009168">
    <property type="term" value="P:purine ribonucleoside monophosphate biosynthetic process"/>
    <property type="evidence" value="ECO:0007669"/>
    <property type="project" value="UniProtKB-UniRule"/>
</dbReference>
<dbReference type="CDD" id="cd01320">
    <property type="entry name" value="ADA"/>
    <property type="match status" value="1"/>
</dbReference>
<dbReference type="FunFam" id="3.20.20.140:FF:000009">
    <property type="entry name" value="Adenosine deaminase"/>
    <property type="match status" value="1"/>
</dbReference>
<dbReference type="Gene3D" id="3.20.20.140">
    <property type="entry name" value="Metal-dependent hydrolases"/>
    <property type="match status" value="1"/>
</dbReference>
<dbReference type="HAMAP" id="MF_00540">
    <property type="entry name" value="A_deaminase"/>
    <property type="match status" value="1"/>
</dbReference>
<dbReference type="InterPro" id="IPR006650">
    <property type="entry name" value="A/AMP_deam_AS"/>
</dbReference>
<dbReference type="InterPro" id="IPR028893">
    <property type="entry name" value="A_deaminase"/>
</dbReference>
<dbReference type="InterPro" id="IPR001365">
    <property type="entry name" value="A_deaminase_dom"/>
</dbReference>
<dbReference type="InterPro" id="IPR006330">
    <property type="entry name" value="Ado/ade_deaminase"/>
</dbReference>
<dbReference type="InterPro" id="IPR032466">
    <property type="entry name" value="Metal_Hydrolase"/>
</dbReference>
<dbReference type="NCBIfam" id="TIGR01430">
    <property type="entry name" value="aden_deam"/>
    <property type="match status" value="1"/>
</dbReference>
<dbReference type="NCBIfam" id="NF006846">
    <property type="entry name" value="PRK09358.1-1"/>
    <property type="match status" value="1"/>
</dbReference>
<dbReference type="PANTHER" id="PTHR11409">
    <property type="entry name" value="ADENOSINE DEAMINASE"/>
    <property type="match status" value="1"/>
</dbReference>
<dbReference type="PANTHER" id="PTHR11409:SF43">
    <property type="entry name" value="ADENOSINE DEAMINASE"/>
    <property type="match status" value="1"/>
</dbReference>
<dbReference type="Pfam" id="PF00962">
    <property type="entry name" value="A_deaminase"/>
    <property type="match status" value="1"/>
</dbReference>
<dbReference type="SUPFAM" id="SSF51556">
    <property type="entry name" value="Metallo-dependent hydrolases"/>
    <property type="match status" value="1"/>
</dbReference>
<dbReference type="PROSITE" id="PS00485">
    <property type="entry name" value="A_DEAMINASE"/>
    <property type="match status" value="1"/>
</dbReference>
<feature type="chain" id="PRO_0000194384" description="Adenosine deaminase">
    <location>
        <begin position="1"/>
        <end position="333"/>
    </location>
</feature>
<feature type="active site" description="Proton donor" evidence="1">
    <location>
        <position position="200"/>
    </location>
</feature>
<feature type="binding site" evidence="1 2 3">
    <location>
        <position position="12"/>
    </location>
    <ligand>
        <name>Zn(2+)</name>
        <dbReference type="ChEBI" id="CHEBI:29105"/>
        <note>catalytic</note>
    </ligand>
</feature>
<feature type="binding site" evidence="2 3">
    <location>
        <begin position="14"/>
        <end position="16"/>
    </location>
    <ligand>
        <name>pentostatin</name>
        <dbReference type="ChEBI" id="CHEBI:229687"/>
        <note>inhibitor</note>
    </ligand>
</feature>
<feature type="binding site" evidence="1">
    <location>
        <position position="14"/>
    </location>
    <ligand>
        <name>substrate</name>
    </ligand>
</feature>
<feature type="binding site" evidence="1 2 3">
    <location>
        <position position="14"/>
    </location>
    <ligand>
        <name>Zn(2+)</name>
        <dbReference type="ChEBI" id="CHEBI:29105"/>
        <note>catalytic</note>
    </ligand>
</feature>
<feature type="binding site" evidence="1">
    <location>
        <position position="16"/>
    </location>
    <ligand>
        <name>substrate</name>
    </ligand>
</feature>
<feature type="binding site" evidence="2 3">
    <location>
        <position position="141"/>
    </location>
    <ligand>
        <name>pentostatin</name>
        <dbReference type="ChEBI" id="CHEBI:229687"/>
        <note>inhibitor</note>
    </ligand>
</feature>
<feature type="binding site" evidence="2 3">
    <location>
        <position position="170"/>
    </location>
    <ligand>
        <name>pentostatin</name>
        <dbReference type="ChEBI" id="CHEBI:229687"/>
        <note>inhibitor</note>
    </ligand>
</feature>
<feature type="binding site" evidence="1">
    <location>
        <position position="170"/>
    </location>
    <ligand>
        <name>substrate</name>
    </ligand>
</feature>
<feature type="binding site" evidence="1 2 3">
    <location>
        <position position="197"/>
    </location>
    <ligand>
        <name>Zn(2+)</name>
        <dbReference type="ChEBI" id="CHEBI:29105"/>
        <note>catalytic</note>
    </ligand>
</feature>
<feature type="binding site" evidence="2 3">
    <location>
        <position position="200"/>
    </location>
    <ligand>
        <name>pentostatin</name>
        <dbReference type="ChEBI" id="CHEBI:229687"/>
        <note>inhibitor</note>
    </ligand>
</feature>
<feature type="binding site" evidence="2 3">
    <location>
        <position position="221"/>
    </location>
    <ligand>
        <name>pentostatin</name>
        <dbReference type="ChEBI" id="CHEBI:229687"/>
        <note>inhibitor</note>
    </ligand>
</feature>
<feature type="binding site" evidence="2 3">
    <location>
        <position position="278"/>
    </location>
    <ligand>
        <name>pentostatin</name>
        <dbReference type="ChEBI" id="CHEBI:229687"/>
        <note>inhibitor</note>
    </ligand>
</feature>
<feature type="binding site" evidence="1 2 3">
    <location>
        <position position="278"/>
    </location>
    <ligand>
        <name>Zn(2+)</name>
        <dbReference type="ChEBI" id="CHEBI:29105"/>
        <note>catalytic</note>
    </ligand>
</feature>
<feature type="binding site" evidence="1">
    <location>
        <position position="279"/>
    </location>
    <ligand>
        <name>substrate</name>
    </ligand>
</feature>
<feature type="site" description="Important for catalytic activity" evidence="1">
    <location>
        <position position="221"/>
    </location>
</feature>
<feature type="strand" evidence="4">
    <location>
        <begin position="9"/>
        <end position="14"/>
    </location>
</feature>
<feature type="helix" evidence="4">
    <location>
        <begin position="15"/>
        <end position="17"/>
    </location>
</feature>
<feature type="helix" evidence="4">
    <location>
        <begin position="21"/>
        <end position="31"/>
    </location>
</feature>
<feature type="helix" evidence="4">
    <location>
        <begin position="40"/>
        <end position="47"/>
    </location>
</feature>
<feature type="helix" evidence="4">
    <location>
        <begin position="56"/>
        <end position="61"/>
    </location>
</feature>
<feature type="helix" evidence="4">
    <location>
        <begin position="64"/>
        <end position="68"/>
    </location>
</feature>
<feature type="helix" evidence="4">
    <location>
        <begin position="73"/>
        <end position="89"/>
    </location>
</feature>
<feature type="strand" evidence="4">
    <location>
        <begin position="93"/>
        <end position="99"/>
    </location>
</feature>
<feature type="helix" evidence="4">
    <location>
        <begin position="101"/>
        <end position="105"/>
    </location>
</feature>
<feature type="turn" evidence="4">
    <location>
        <begin position="106"/>
        <end position="109"/>
    </location>
</feature>
<feature type="helix" evidence="4">
    <location>
        <begin position="112"/>
        <end position="130"/>
    </location>
</feature>
<feature type="strand" evidence="4">
    <location>
        <begin position="133"/>
        <end position="141"/>
    </location>
</feature>
<feature type="helix" evidence="4">
    <location>
        <begin position="142"/>
        <end position="144"/>
    </location>
</feature>
<feature type="helix" evidence="4">
    <location>
        <begin position="146"/>
        <end position="157"/>
    </location>
</feature>
<feature type="helix" evidence="4">
    <location>
        <begin position="158"/>
        <end position="162"/>
    </location>
</feature>
<feature type="strand" evidence="4">
    <location>
        <begin position="165"/>
        <end position="170"/>
    </location>
</feature>
<feature type="turn" evidence="4">
    <location>
        <begin position="172"/>
        <end position="174"/>
    </location>
</feature>
<feature type="helix" evidence="4">
    <location>
        <begin position="177"/>
        <end position="180"/>
    </location>
</feature>
<feature type="helix" evidence="4">
    <location>
        <begin position="181"/>
        <end position="189"/>
    </location>
</feature>
<feature type="strand" evidence="4">
    <location>
        <begin position="193"/>
        <end position="202"/>
    </location>
</feature>
<feature type="helix" evidence="4">
    <location>
        <begin position="204"/>
        <end position="212"/>
    </location>
</feature>
<feature type="strand" evidence="4">
    <location>
        <begin position="217"/>
        <end position="221"/>
    </location>
</feature>
<feature type="helix" evidence="4">
    <location>
        <begin position="223"/>
        <end position="227"/>
    </location>
</feature>
<feature type="helix" evidence="4">
    <location>
        <begin position="229"/>
        <end position="238"/>
    </location>
</feature>
<feature type="strand" evidence="4">
    <location>
        <begin position="241"/>
        <end position="244"/>
    </location>
</feature>
<feature type="helix" evidence="4">
    <location>
        <begin position="246"/>
        <end position="251"/>
    </location>
</feature>
<feature type="strand" evidence="4">
    <location>
        <begin position="254"/>
        <end position="256"/>
    </location>
</feature>
<feature type="helix" evidence="4">
    <location>
        <begin position="258"/>
        <end position="260"/>
    </location>
</feature>
<feature type="helix" evidence="4">
    <location>
        <begin position="263"/>
        <end position="268"/>
    </location>
</feature>
<feature type="strand" evidence="4">
    <location>
        <begin position="273"/>
        <end position="275"/>
    </location>
</feature>
<feature type="helix" evidence="4">
    <location>
        <begin position="280"/>
        <end position="283"/>
    </location>
</feature>
<feature type="helix" evidence="4">
    <location>
        <begin position="287"/>
        <end position="292"/>
    </location>
</feature>
<feature type="helix" evidence="4">
    <location>
        <begin position="294"/>
        <end position="297"/>
    </location>
</feature>
<feature type="helix" evidence="4">
    <location>
        <begin position="302"/>
        <end position="314"/>
    </location>
</feature>
<feature type="helix" evidence="4">
    <location>
        <begin position="320"/>
        <end position="330"/>
    </location>
</feature>
<comment type="function">
    <text evidence="1">Catalyzes the hydrolytic deamination of adenosine and 2-deoxyadenosine.</text>
</comment>
<comment type="catalytic activity">
    <reaction evidence="1">
        <text>adenosine + H2O + H(+) = inosine + NH4(+)</text>
        <dbReference type="Rhea" id="RHEA:24408"/>
        <dbReference type="ChEBI" id="CHEBI:15377"/>
        <dbReference type="ChEBI" id="CHEBI:15378"/>
        <dbReference type="ChEBI" id="CHEBI:16335"/>
        <dbReference type="ChEBI" id="CHEBI:17596"/>
        <dbReference type="ChEBI" id="CHEBI:28938"/>
        <dbReference type="EC" id="3.5.4.4"/>
    </reaction>
    <physiologicalReaction direction="left-to-right" evidence="1">
        <dbReference type="Rhea" id="RHEA:24409"/>
    </physiologicalReaction>
</comment>
<comment type="catalytic activity">
    <reaction evidence="1">
        <text>2'-deoxyadenosine + H2O + H(+) = 2'-deoxyinosine + NH4(+)</text>
        <dbReference type="Rhea" id="RHEA:28190"/>
        <dbReference type="ChEBI" id="CHEBI:15377"/>
        <dbReference type="ChEBI" id="CHEBI:15378"/>
        <dbReference type="ChEBI" id="CHEBI:17256"/>
        <dbReference type="ChEBI" id="CHEBI:28938"/>
        <dbReference type="ChEBI" id="CHEBI:28997"/>
        <dbReference type="EC" id="3.5.4.4"/>
    </reaction>
    <physiologicalReaction direction="left-to-right" evidence="1">
        <dbReference type="Rhea" id="RHEA:28191"/>
    </physiologicalReaction>
</comment>
<comment type="cofactor">
    <cofactor evidence="1">
        <name>Zn(2+)</name>
        <dbReference type="ChEBI" id="CHEBI:29105"/>
    </cofactor>
    <text evidence="1 2">Binds 1 zinc ion per subunit.</text>
</comment>
<comment type="similarity">
    <text evidence="1">Belongs to the metallo-dependent hydrolases superfamily. Adenosine and AMP deaminases family. Adenosine deaminase subfamily.</text>
</comment>
<accession>Q8ZPL9</accession>
<sequence>MIDITLPLTDIHRHLDGNIRAQTILDLGRQFNIALPAQTLETLIPHVQVTSTEPDLVSFLTKLDWGVKVLASLDACRRVAFENIEDAARNGLHYVELRFSPGYMAMAHQLPIAGVVEAVIDGVRDGCNTFGVEARLIGIMSRTFGEAACLQELDALLAHRENITALDLAGDELGFPGSLFLSHFNRARDAGWHITVHAGEAAGPESIWQAIRELGAERIGHGVKAVEDRALMDFLAQQRIGIESCLTSNIQTSTVASLADHPLKTFLEHGVLASLNTDDPAVQGVDIIHEYHVAAPAAGLSREQIRQAQINGLEIAFLSDSEKRALREKVAEA</sequence>
<keyword id="KW-0002">3D-structure</keyword>
<keyword id="KW-0378">Hydrolase</keyword>
<keyword id="KW-0479">Metal-binding</keyword>
<keyword id="KW-0546">Nucleotide metabolism</keyword>
<keyword id="KW-1185">Reference proteome</keyword>
<keyword id="KW-0862">Zinc</keyword>
<protein>
    <recommendedName>
        <fullName evidence="1">Adenosine deaminase</fullName>
        <ecNumber evidence="1">3.5.4.4</ecNumber>
    </recommendedName>
    <alternativeName>
        <fullName evidence="1">Adenosine aminohydrolase</fullName>
    </alternativeName>
</protein>